<evidence type="ECO:0000250" key="1"/>
<evidence type="ECO:0000250" key="2">
    <source>
        <dbReference type="UniProtKB" id="P46889"/>
    </source>
</evidence>
<evidence type="ECO:0000255" key="3">
    <source>
        <dbReference type="PROSITE-ProRule" id="PRU00289"/>
    </source>
</evidence>
<evidence type="ECO:0000256" key="4">
    <source>
        <dbReference type="SAM" id="MobiDB-lite"/>
    </source>
</evidence>
<evidence type="ECO:0000305" key="5"/>
<keyword id="KW-0067">ATP-binding</keyword>
<keyword id="KW-0131">Cell cycle</keyword>
<keyword id="KW-0132">Cell division</keyword>
<keyword id="KW-0997">Cell inner membrane</keyword>
<keyword id="KW-1003">Cell membrane</keyword>
<keyword id="KW-0159">Chromosome partition</keyword>
<keyword id="KW-0238">DNA-binding</keyword>
<keyword id="KW-0472">Membrane</keyword>
<keyword id="KW-0547">Nucleotide-binding</keyword>
<keyword id="KW-0812">Transmembrane</keyword>
<keyword id="KW-1133">Transmembrane helix</keyword>
<gene>
    <name type="primary">ftsK</name>
    <name type="ordered locus">STY0958</name>
    <name type="ordered locus">t1974</name>
</gene>
<proteinExistence type="inferred from homology"/>
<accession>Q8Z814</accession>
<feature type="chain" id="PRO_0000098288" description="DNA translocase FtsK">
    <location>
        <begin position="1"/>
        <end position="1343"/>
    </location>
</feature>
<feature type="topological domain" description="Cytoplasmic" evidence="2">
    <location>
        <begin position="1"/>
        <end position="24"/>
    </location>
</feature>
<feature type="transmembrane region" description="Helical" evidence="2">
    <location>
        <begin position="25"/>
        <end position="44"/>
    </location>
</feature>
<feature type="topological domain" description="Periplasmic" evidence="2">
    <location>
        <begin position="45"/>
        <end position="74"/>
    </location>
</feature>
<feature type="transmembrane region" description="Helical" evidence="2">
    <location>
        <begin position="75"/>
        <end position="98"/>
    </location>
</feature>
<feature type="topological domain" description="Cytoplasmic" evidence="2">
    <location>
        <begin position="99"/>
        <end position="115"/>
    </location>
</feature>
<feature type="transmembrane region" description="Helical" evidence="2">
    <location>
        <begin position="116"/>
        <end position="132"/>
    </location>
</feature>
<feature type="topological domain" description="Periplasmic" evidence="2">
    <location>
        <begin position="133"/>
        <end position="162"/>
    </location>
</feature>
<feature type="transmembrane region" description="Helical" evidence="2">
    <location>
        <begin position="163"/>
        <end position="179"/>
    </location>
</feature>
<feature type="topological domain" description="Cytoplasmic" evidence="2">
    <location>
        <begin position="180"/>
        <end position="1343"/>
    </location>
</feature>
<feature type="domain" description="FtsK" evidence="3">
    <location>
        <begin position="988"/>
        <end position="1201"/>
    </location>
</feature>
<feature type="region of interest" description="Disordered" evidence="4">
    <location>
        <begin position="357"/>
        <end position="475"/>
    </location>
</feature>
<feature type="region of interest" description="Disordered" evidence="4">
    <location>
        <begin position="556"/>
        <end position="586"/>
    </location>
</feature>
<feature type="region of interest" description="Disordered" evidence="4">
    <location>
        <begin position="600"/>
        <end position="619"/>
    </location>
</feature>
<feature type="region of interest" description="Disordered" evidence="4">
    <location>
        <begin position="633"/>
        <end position="863"/>
    </location>
</feature>
<feature type="region of interest" description="Disordered" evidence="4">
    <location>
        <begin position="1256"/>
        <end position="1275"/>
    </location>
</feature>
<feature type="compositionally biased region" description="Polar residues" evidence="4">
    <location>
        <begin position="385"/>
        <end position="395"/>
    </location>
</feature>
<feature type="compositionally biased region" description="Low complexity" evidence="4">
    <location>
        <begin position="402"/>
        <end position="415"/>
    </location>
</feature>
<feature type="compositionally biased region" description="Basic and acidic residues" evidence="4">
    <location>
        <begin position="600"/>
        <end position="611"/>
    </location>
</feature>
<feature type="compositionally biased region" description="Low complexity" evidence="4">
    <location>
        <begin position="662"/>
        <end position="671"/>
    </location>
</feature>
<feature type="compositionally biased region" description="Low complexity" evidence="4">
    <location>
        <begin position="721"/>
        <end position="830"/>
    </location>
</feature>
<feature type="compositionally biased region" description="Low complexity" evidence="4">
    <location>
        <begin position="850"/>
        <end position="860"/>
    </location>
</feature>
<feature type="binding site" evidence="3">
    <location>
        <begin position="1008"/>
        <end position="1013"/>
    </location>
    <ligand>
        <name>ATP</name>
        <dbReference type="ChEBI" id="CHEBI:30616"/>
    </ligand>
</feature>
<name>FTSK_SALTI</name>
<reference key="1">
    <citation type="journal article" date="2001" name="Nature">
        <title>Complete genome sequence of a multiple drug resistant Salmonella enterica serovar Typhi CT18.</title>
        <authorList>
            <person name="Parkhill J."/>
            <person name="Dougan G."/>
            <person name="James K.D."/>
            <person name="Thomson N.R."/>
            <person name="Pickard D."/>
            <person name="Wain J."/>
            <person name="Churcher C.M."/>
            <person name="Mungall K.L."/>
            <person name="Bentley S.D."/>
            <person name="Holden M.T.G."/>
            <person name="Sebaihia M."/>
            <person name="Baker S."/>
            <person name="Basham D."/>
            <person name="Brooks K."/>
            <person name="Chillingworth T."/>
            <person name="Connerton P."/>
            <person name="Cronin A."/>
            <person name="Davis P."/>
            <person name="Davies R.M."/>
            <person name="Dowd L."/>
            <person name="White N."/>
            <person name="Farrar J."/>
            <person name="Feltwell T."/>
            <person name="Hamlin N."/>
            <person name="Haque A."/>
            <person name="Hien T.T."/>
            <person name="Holroyd S."/>
            <person name="Jagels K."/>
            <person name="Krogh A."/>
            <person name="Larsen T.S."/>
            <person name="Leather S."/>
            <person name="Moule S."/>
            <person name="O'Gaora P."/>
            <person name="Parry C."/>
            <person name="Quail M.A."/>
            <person name="Rutherford K.M."/>
            <person name="Simmonds M."/>
            <person name="Skelton J."/>
            <person name="Stevens K."/>
            <person name="Whitehead S."/>
            <person name="Barrell B.G."/>
        </authorList>
    </citation>
    <scope>NUCLEOTIDE SEQUENCE [LARGE SCALE GENOMIC DNA]</scope>
    <source>
        <strain>CT18</strain>
    </source>
</reference>
<reference key="2">
    <citation type="journal article" date="2003" name="J. Bacteriol.">
        <title>Comparative genomics of Salmonella enterica serovar Typhi strains Ty2 and CT18.</title>
        <authorList>
            <person name="Deng W."/>
            <person name="Liou S.-R."/>
            <person name="Plunkett G. III"/>
            <person name="Mayhew G.F."/>
            <person name="Rose D.J."/>
            <person name="Burland V."/>
            <person name="Kodoyianni V."/>
            <person name="Schwartz D.C."/>
            <person name="Blattner F.R."/>
        </authorList>
    </citation>
    <scope>NUCLEOTIDE SEQUENCE [LARGE SCALE GENOMIC DNA]</scope>
    <source>
        <strain>ATCC 700931 / Ty2</strain>
    </source>
</reference>
<protein>
    <recommendedName>
        <fullName>DNA translocase FtsK</fullName>
    </recommendedName>
</protein>
<comment type="function">
    <text evidence="1">Essential cell division protein that coordinates cell division and chromosome segregation. The N-terminus is involved in assembly of the cell-division machinery. The C-terminus functions as a DNA motor that moves dsDNA in an ATP-dependent manner towards the dif recombination site, which is located within the replication terminus region. Translocation stops specifically at Xer-dif sites, where FtsK interacts with the Xer recombinase, allowing activation of chromosome unlinking by recombination. FtsK orienting polar sequences (KOPS) guide the direction of DNA translocation. FtsK can remove proteins from DNA as it translocates, but translocation stops specifically at XerCD-dif site, thereby preventing removal of XerC and XerD from dif (By similarity).</text>
</comment>
<comment type="subunit">
    <text evidence="1">Homohexamer. Forms a ring that surrounds DNA (By similarity).</text>
</comment>
<comment type="subcellular location">
    <subcellularLocation>
        <location evidence="1">Cell inner membrane</location>
        <topology evidence="1">Multi-pass membrane protein</topology>
    </subcellularLocation>
    <text evidence="1">Located at the septum.</text>
</comment>
<comment type="domain">
    <text evidence="1">Consists of an N-terminal domain, which is sufficient for the localization to the septal ring and is required for cell division, followed by a linker domain, and a C-terminal domain, which forms the translocation motor involved in chromosome segregation. The C-terminal domain can be further subdivided into alpha, beta and gamma subdomains. The alpha and beta subdomains multimerise to produce a hexameric ring, contain the nucleotide binding motif and form the DNA pump. The gamma subdomain is a regulatory subdomain that controls translocation of DNA by recognition of KOPS motifs and interacts with XerD recombinase (By similarity).</text>
</comment>
<comment type="similarity">
    <text evidence="5">Belongs to the FtsK/SpoIIIE/SftA family.</text>
</comment>
<organism>
    <name type="scientific">Salmonella typhi</name>
    <dbReference type="NCBI Taxonomy" id="90370"/>
    <lineage>
        <taxon>Bacteria</taxon>
        <taxon>Pseudomonadati</taxon>
        <taxon>Pseudomonadota</taxon>
        <taxon>Gammaproteobacteria</taxon>
        <taxon>Enterobacterales</taxon>
        <taxon>Enterobacteriaceae</taxon>
        <taxon>Salmonella</taxon>
    </lineage>
</organism>
<sequence length="1343" mass="147375">MSQEYTEDKDVTLTKLSSGRRLLEALLILIALFAVWLMAALLSFNPSDPSWSQTAWHEPIHNLGGAPGAWLADTLFFIFGVMAYTIPVIIVGGCWFAWRHQSTDDYIDYFAVSLRLIGVLALILTSCGLAAINADDIWYFASGGVIGSLLSTTLQPLLHSSGGTIMLLCIWAAGLTLFTGWSWVSIAEKLGGWLLNILTFASNRTRRDDTWVDDEEYDDEYDEETDGVQRESRRARILRGALARRKRLAEKFSNPRGRQTDAALFSGKRMDDDEDIQYSARGVAADPDDVLFSGNRATQSEYDEYDPLLNGHSVTEPVAAAAAATAVTQTWAASADPIMQTPPMPGAEPVVAQPTVEWQPVPGPQTGEPVIAPAPEGYQPHPQYAQPQEAQSAPWQQPVPVASAPQYAATPATAAEYDSLAPQETQPQWQAPDAEQHWQPEPIAAEPSHMPPPVIEQPVATEPEPGIEETRPARPPLYYFEEVEEKRAREREQLAAWYQPIPEPVKENVPVKPTVSVAPSIPPVEAVAAAASLDTGIKSGALAAGAAAAAPAFSLATGGAPRPQVKEGIGPQLPRPNRVRVPTRRELASYGIKLPSQRIAEEKAREAERNQYETGAQLTDEEIDAMHQDELARQFAQSQQHRYGETYQHDTQQAEDDDTAAEAELARQFAASQQQRYSGEQPAGAQPFSLDDLDFSPMKVLVDEGPHEPLFTPGVMPESTPVQQPVAPQPQYQQPVAPQPQYQQPQQPVASQPQYQQPQQPVAPQPQYQQPQQPVAPQPQYQQPQQPVAPQPQYQQPQQPVAPQPQYQQPQQPVAPQPQYQQPQQPTAPQDSLIHPLLMRNGDSRPLQRPTTPLPSLDLLTPPPSEVEPVDTFALEQMARLVEARLADFRIKADVVNYSPGPVITRFELNLAPGVKAARISNLSRDLARSLSTVAVRVVEVIPGKPYVGLELPNKKRQTVYLREVLDNAKFRENPSPLTVVLGKDIAGDPVVADLAKMPHLLVAGTTGSGKSVGVNAMILSMLYKAQPEDVRFIMIDPKMLELSVYEGIPHLLTEVVTDMKDAANALRWSVNEMERRYKLMSALGVRNLAGYNEKIAEAARMGRPIPDPYWKPGDSMDVQHPVLEKLPYIVVLVDEFADLMMTVGKKVEELIARLAQKARAAGIHLVLATQRPSVDVITGLIKANIPTRIAFTVSSKIDSRTILDQGGAESLLGMGDMLYSGPNSTMPVRVHGAFVRDQEVHAVVQDWKARGRPQYVDGITSDSESEGGGGGFDGGEELDALFDQAVNFVTQKRKASISGVQRQFRIGYNRAARIIEQMEAQGIVSAQGHNGNREVLAPPPFE</sequence>
<dbReference type="EMBL" id="AL513382">
    <property type="protein sequence ID" value="CAD05360.1"/>
    <property type="molecule type" value="Genomic_DNA"/>
</dbReference>
<dbReference type="EMBL" id="AE014613">
    <property type="protein sequence ID" value="AAO69587.1"/>
    <property type="molecule type" value="Genomic_DNA"/>
</dbReference>
<dbReference type="RefSeq" id="NP_455448.1">
    <property type="nucleotide sequence ID" value="NC_003198.1"/>
</dbReference>
<dbReference type="RefSeq" id="WP_000076972.1">
    <property type="nucleotide sequence ID" value="NZ_WSUP01000047.1"/>
</dbReference>
<dbReference type="SMR" id="Q8Z814"/>
<dbReference type="STRING" id="220341.gene:17584951"/>
<dbReference type="KEGG" id="stt:t1974"/>
<dbReference type="KEGG" id="sty:STY0958"/>
<dbReference type="PATRIC" id="fig|220341.7.peg.966"/>
<dbReference type="eggNOG" id="COG1674">
    <property type="taxonomic scope" value="Bacteria"/>
</dbReference>
<dbReference type="eggNOG" id="COG3087">
    <property type="taxonomic scope" value="Bacteria"/>
</dbReference>
<dbReference type="HOGENOM" id="CLU_001981_0_1_6"/>
<dbReference type="OMA" id="DPFWKPG"/>
<dbReference type="Proteomes" id="UP000000541">
    <property type="component" value="Chromosome"/>
</dbReference>
<dbReference type="Proteomes" id="UP000002670">
    <property type="component" value="Chromosome"/>
</dbReference>
<dbReference type="GO" id="GO:0005886">
    <property type="term" value="C:plasma membrane"/>
    <property type="evidence" value="ECO:0007669"/>
    <property type="project" value="UniProtKB-SubCell"/>
</dbReference>
<dbReference type="GO" id="GO:0005524">
    <property type="term" value="F:ATP binding"/>
    <property type="evidence" value="ECO:0007669"/>
    <property type="project" value="UniProtKB-KW"/>
</dbReference>
<dbReference type="GO" id="GO:0003677">
    <property type="term" value="F:DNA binding"/>
    <property type="evidence" value="ECO:0007669"/>
    <property type="project" value="UniProtKB-KW"/>
</dbReference>
<dbReference type="GO" id="GO:0051301">
    <property type="term" value="P:cell division"/>
    <property type="evidence" value="ECO:0007669"/>
    <property type="project" value="UniProtKB-KW"/>
</dbReference>
<dbReference type="GO" id="GO:0007059">
    <property type="term" value="P:chromosome segregation"/>
    <property type="evidence" value="ECO:0007669"/>
    <property type="project" value="UniProtKB-KW"/>
</dbReference>
<dbReference type="CDD" id="cd01127">
    <property type="entry name" value="TrwB_TraG_TraD_VirD4"/>
    <property type="match status" value="1"/>
</dbReference>
<dbReference type="FunFam" id="3.40.50.300:FF:000209">
    <property type="entry name" value="Cell division protein FtsK"/>
    <property type="match status" value="1"/>
</dbReference>
<dbReference type="FunFam" id="1.10.10.10:FF:000268">
    <property type="entry name" value="DNA translocase FtsK"/>
    <property type="match status" value="1"/>
</dbReference>
<dbReference type="FunFam" id="3.30.980.40:FF:000001">
    <property type="entry name" value="DNA translocase FtsK"/>
    <property type="match status" value="1"/>
</dbReference>
<dbReference type="Gene3D" id="3.30.980.40">
    <property type="match status" value="1"/>
</dbReference>
<dbReference type="Gene3D" id="3.40.50.300">
    <property type="entry name" value="P-loop containing nucleotide triphosphate hydrolases"/>
    <property type="match status" value="1"/>
</dbReference>
<dbReference type="Gene3D" id="1.10.10.10">
    <property type="entry name" value="Winged helix-like DNA-binding domain superfamily/Winged helix DNA-binding domain"/>
    <property type="match status" value="1"/>
</dbReference>
<dbReference type="InterPro" id="IPR050206">
    <property type="entry name" value="FtsK/SpoIIIE/SftA"/>
</dbReference>
<dbReference type="InterPro" id="IPR025199">
    <property type="entry name" value="FtsK_4TM"/>
</dbReference>
<dbReference type="InterPro" id="IPR041027">
    <property type="entry name" value="FtsK_alpha"/>
</dbReference>
<dbReference type="InterPro" id="IPR002543">
    <property type="entry name" value="FtsK_dom"/>
</dbReference>
<dbReference type="InterPro" id="IPR018541">
    <property type="entry name" value="Ftsk_gamma"/>
</dbReference>
<dbReference type="InterPro" id="IPR027417">
    <property type="entry name" value="P-loop_NTPase"/>
</dbReference>
<dbReference type="InterPro" id="IPR036388">
    <property type="entry name" value="WH-like_DNA-bd_sf"/>
</dbReference>
<dbReference type="InterPro" id="IPR036390">
    <property type="entry name" value="WH_DNA-bd_sf"/>
</dbReference>
<dbReference type="NCBIfam" id="NF007615">
    <property type="entry name" value="PRK10263.1"/>
    <property type="match status" value="1"/>
</dbReference>
<dbReference type="PANTHER" id="PTHR22683:SF41">
    <property type="entry name" value="DNA TRANSLOCASE FTSK"/>
    <property type="match status" value="1"/>
</dbReference>
<dbReference type="PANTHER" id="PTHR22683">
    <property type="entry name" value="SPORULATION PROTEIN RELATED"/>
    <property type="match status" value="1"/>
</dbReference>
<dbReference type="Pfam" id="PF13491">
    <property type="entry name" value="FtsK_4TM"/>
    <property type="match status" value="1"/>
</dbReference>
<dbReference type="Pfam" id="PF17854">
    <property type="entry name" value="FtsK_alpha"/>
    <property type="match status" value="1"/>
</dbReference>
<dbReference type="Pfam" id="PF09397">
    <property type="entry name" value="FtsK_gamma"/>
    <property type="match status" value="1"/>
</dbReference>
<dbReference type="Pfam" id="PF01580">
    <property type="entry name" value="FtsK_SpoIIIE"/>
    <property type="match status" value="1"/>
</dbReference>
<dbReference type="SMART" id="SM00843">
    <property type="entry name" value="Ftsk_gamma"/>
    <property type="match status" value="1"/>
</dbReference>
<dbReference type="SUPFAM" id="SSF52540">
    <property type="entry name" value="P-loop containing nucleoside triphosphate hydrolases"/>
    <property type="match status" value="1"/>
</dbReference>
<dbReference type="SUPFAM" id="SSF46785">
    <property type="entry name" value="Winged helix' DNA-binding domain"/>
    <property type="match status" value="1"/>
</dbReference>
<dbReference type="PROSITE" id="PS50901">
    <property type="entry name" value="FTSK"/>
    <property type="match status" value="1"/>
</dbReference>